<comment type="function">
    <text evidence="1">Na(+)/H(+) antiporter that extrudes sodium in exchange for external protons.</text>
</comment>
<comment type="catalytic activity">
    <reaction evidence="1">
        <text>Na(+)(in) + 2 H(+)(out) = Na(+)(out) + 2 H(+)(in)</text>
        <dbReference type="Rhea" id="RHEA:29251"/>
        <dbReference type="ChEBI" id="CHEBI:15378"/>
        <dbReference type="ChEBI" id="CHEBI:29101"/>
    </reaction>
    <physiologicalReaction direction="left-to-right" evidence="1">
        <dbReference type="Rhea" id="RHEA:29252"/>
    </physiologicalReaction>
</comment>
<comment type="subcellular location">
    <subcellularLocation>
        <location evidence="1">Cell membrane</location>
        <topology evidence="1">Multi-pass membrane protein</topology>
    </subcellularLocation>
</comment>
<comment type="similarity">
    <text evidence="3">In the N-terminal section; belongs to the NhaA Na(+)/H(+) (TC 2.A.33) antiporter family.</text>
</comment>
<gene>
    <name evidence="1" type="primary">nhaA1</name>
    <name type="ordered locus">Mmcs_0486</name>
</gene>
<name>NHAA1_MYCSS</name>
<sequence>MTEASARTIGPLPSRFSRDPKTPRSTDNAAAALLLAFTVLAILWANSPWAQSYSIFWDTDVAVSFGEYRAELSVKHLVNDGLMAFFFFIVGLEVKSEFVIGELTDRSRAAVPVVAAIAGLIVPAVIFLTFNPSGPDAQAWGVVISTDTAFLVGALAVIKPKFPARLRIFLLTLAVVDDVGALGAIALFYTDDLKLAPLAVAALLIAALAMVRRLPSLRGPAYAVLGFALWIALYLAHVHPTLAGVAVAVLIPVFTPERRQVEQTVDLVRAFRQSPNPQYARAVTRGLRESISINERLQTAVGPYVSFVVLPIFALANAGVHLDEQTITAAMSSTLTWGIVAGLVVGKFVGITAATALMSATGWGQLAPGLSLRRVAGGAALSGIGFTISLFIVDVAIEDPARQDEARVGVLIASVLAFTLSWALFRITDWISPPEPVGLTLVRPVDPERDHIRGDPDAPLVLVEYGDYECPFCGRATGAIDEVRTHFGDDLLYVWRHFPLERAHPRSFDAARASEGAAAQGKFFEMGRELFAHQDDLEWSDMYRYAVAIGLDIEQFDQDVRVHASKVLHRVRDDAQDAEVMDLNSTPTFFVNGKRHKGPWDAASLIRALEAGR</sequence>
<reference key="1">
    <citation type="submission" date="2006-06" db="EMBL/GenBank/DDBJ databases">
        <title>Complete sequence of chromosome of Mycobacterium sp. MCS.</title>
        <authorList>
            <consortium name="US DOE Joint Genome Institute"/>
            <person name="Copeland A."/>
            <person name="Lucas S."/>
            <person name="Lapidus A."/>
            <person name="Barry K."/>
            <person name="Detter J.C."/>
            <person name="Glavina del Rio T."/>
            <person name="Hammon N."/>
            <person name="Israni S."/>
            <person name="Dalin E."/>
            <person name="Tice H."/>
            <person name="Pitluck S."/>
            <person name="Martinez M."/>
            <person name="Schmutz J."/>
            <person name="Larimer F."/>
            <person name="Land M."/>
            <person name="Hauser L."/>
            <person name="Kyrpides N."/>
            <person name="Kim E."/>
            <person name="Miller C.D."/>
            <person name="Hughes J.E."/>
            <person name="Anderson A.J."/>
            <person name="Sims R.C."/>
            <person name="Richardson P."/>
        </authorList>
    </citation>
    <scope>NUCLEOTIDE SEQUENCE [LARGE SCALE GENOMIC DNA]</scope>
    <source>
        <strain>MCS</strain>
    </source>
</reference>
<proteinExistence type="inferred from homology"/>
<accession>Q1BES7</accession>
<evidence type="ECO:0000255" key="1">
    <source>
        <dbReference type="HAMAP-Rule" id="MF_01844"/>
    </source>
</evidence>
<evidence type="ECO:0000256" key="2">
    <source>
        <dbReference type="SAM" id="MobiDB-lite"/>
    </source>
</evidence>
<evidence type="ECO:0000305" key="3"/>
<protein>
    <recommendedName>
        <fullName evidence="1">Na(+)/H(+) antiporter NhaA 1</fullName>
    </recommendedName>
    <alternativeName>
        <fullName evidence="1">Sodium/proton antiporter NhaA 1</fullName>
    </alternativeName>
</protein>
<organism>
    <name type="scientific">Mycobacterium sp. (strain MCS)</name>
    <dbReference type="NCBI Taxonomy" id="164756"/>
    <lineage>
        <taxon>Bacteria</taxon>
        <taxon>Bacillati</taxon>
        <taxon>Actinomycetota</taxon>
        <taxon>Actinomycetes</taxon>
        <taxon>Mycobacteriales</taxon>
        <taxon>Mycobacteriaceae</taxon>
        <taxon>Mycobacterium</taxon>
    </lineage>
</organism>
<dbReference type="EMBL" id="CP000384">
    <property type="protein sequence ID" value="ABG06607.1"/>
    <property type="molecule type" value="Genomic_DNA"/>
</dbReference>
<dbReference type="SMR" id="Q1BES7"/>
<dbReference type="KEGG" id="mmc:Mmcs_0486"/>
<dbReference type="HOGENOM" id="CLU_015803_3_0_11"/>
<dbReference type="BioCyc" id="MSP164756:G1G6O-497-MONOMER"/>
<dbReference type="GO" id="GO:0005886">
    <property type="term" value="C:plasma membrane"/>
    <property type="evidence" value="ECO:0007669"/>
    <property type="project" value="UniProtKB-SubCell"/>
</dbReference>
<dbReference type="GO" id="GO:0016491">
    <property type="term" value="F:oxidoreductase activity"/>
    <property type="evidence" value="ECO:0007669"/>
    <property type="project" value="UniProtKB-ARBA"/>
</dbReference>
<dbReference type="GO" id="GO:0015385">
    <property type="term" value="F:sodium:proton antiporter activity"/>
    <property type="evidence" value="ECO:0007669"/>
    <property type="project" value="TreeGrafter"/>
</dbReference>
<dbReference type="GO" id="GO:0006885">
    <property type="term" value="P:regulation of pH"/>
    <property type="evidence" value="ECO:0007669"/>
    <property type="project" value="InterPro"/>
</dbReference>
<dbReference type="Gene3D" id="3.40.30.10">
    <property type="entry name" value="Glutaredoxin"/>
    <property type="match status" value="1"/>
</dbReference>
<dbReference type="Gene3D" id="1.20.1530.10">
    <property type="entry name" value="Na+/H+ antiporter like domain"/>
    <property type="match status" value="1"/>
</dbReference>
<dbReference type="HAMAP" id="MF_01844">
    <property type="entry name" value="NhaA"/>
    <property type="match status" value="1"/>
</dbReference>
<dbReference type="InterPro" id="IPR023171">
    <property type="entry name" value="Na/H_antiporter_dom_sf"/>
</dbReference>
<dbReference type="InterPro" id="IPR004670">
    <property type="entry name" value="NhaA"/>
</dbReference>
<dbReference type="InterPro" id="IPR012336">
    <property type="entry name" value="Thioredoxin-like_fold"/>
</dbReference>
<dbReference type="InterPro" id="IPR036249">
    <property type="entry name" value="Thioredoxin-like_sf"/>
</dbReference>
<dbReference type="InterPro" id="IPR013766">
    <property type="entry name" value="Thioredoxin_domain"/>
</dbReference>
<dbReference type="NCBIfam" id="TIGR00773">
    <property type="entry name" value="NhaA"/>
    <property type="match status" value="1"/>
</dbReference>
<dbReference type="PANTHER" id="PTHR30341:SF0">
    <property type="entry name" value="NA(+)_H(+) ANTIPORTER NHAA"/>
    <property type="match status" value="1"/>
</dbReference>
<dbReference type="PANTHER" id="PTHR30341">
    <property type="entry name" value="SODIUM ION/PROTON ANTIPORTER NHAA-RELATED"/>
    <property type="match status" value="1"/>
</dbReference>
<dbReference type="Pfam" id="PF06965">
    <property type="entry name" value="Na_H_antiport_1"/>
    <property type="match status" value="1"/>
</dbReference>
<dbReference type="Pfam" id="PF13462">
    <property type="entry name" value="Thioredoxin_4"/>
    <property type="match status" value="1"/>
</dbReference>
<dbReference type="SUPFAM" id="SSF52833">
    <property type="entry name" value="Thioredoxin-like"/>
    <property type="match status" value="1"/>
</dbReference>
<dbReference type="PROSITE" id="PS51352">
    <property type="entry name" value="THIOREDOXIN_2"/>
    <property type="match status" value="1"/>
</dbReference>
<feature type="chain" id="PRO_0000334481" description="Na(+)/H(+) antiporter NhaA 1">
    <location>
        <begin position="1"/>
        <end position="613"/>
    </location>
</feature>
<feature type="transmembrane region" description="Helical" evidence="1">
    <location>
        <begin position="29"/>
        <end position="49"/>
    </location>
</feature>
<feature type="transmembrane region" description="Helical" evidence="1">
    <location>
        <begin position="81"/>
        <end position="101"/>
    </location>
</feature>
<feature type="transmembrane region" description="Helical" evidence="1">
    <location>
        <begin position="110"/>
        <end position="130"/>
    </location>
</feature>
<feature type="transmembrane region" description="Helical" evidence="1">
    <location>
        <begin position="138"/>
        <end position="158"/>
    </location>
</feature>
<feature type="transmembrane region" description="Helical" evidence="1">
    <location>
        <begin position="168"/>
        <end position="188"/>
    </location>
</feature>
<feature type="transmembrane region" description="Helical" evidence="1">
    <location>
        <begin position="191"/>
        <end position="211"/>
    </location>
</feature>
<feature type="transmembrane region" description="Helical" evidence="1">
    <location>
        <begin position="231"/>
        <end position="251"/>
    </location>
</feature>
<feature type="transmembrane region" description="Helical" evidence="1">
    <location>
        <begin position="300"/>
        <end position="320"/>
    </location>
</feature>
<feature type="transmembrane region" description="Helical" evidence="1">
    <location>
        <begin position="337"/>
        <end position="357"/>
    </location>
</feature>
<feature type="transmembrane region" description="Helical" evidence="1">
    <location>
        <begin position="377"/>
        <end position="397"/>
    </location>
</feature>
<feature type="transmembrane region" description="Helical" evidence="1">
    <location>
        <begin position="408"/>
        <end position="428"/>
    </location>
</feature>
<feature type="domain" description="Thioredoxin">
    <location>
        <begin position="409"/>
        <end position="613"/>
    </location>
</feature>
<feature type="region of interest" description="Na(+)/H(+) antiporter NhaA">
    <location>
        <begin position="1"/>
        <end position="408"/>
    </location>
</feature>
<feature type="region of interest" description="Disordered" evidence="2">
    <location>
        <begin position="1"/>
        <end position="23"/>
    </location>
</feature>
<keyword id="KW-0050">Antiport</keyword>
<keyword id="KW-1003">Cell membrane</keyword>
<keyword id="KW-0406">Ion transport</keyword>
<keyword id="KW-0472">Membrane</keyword>
<keyword id="KW-0915">Sodium</keyword>
<keyword id="KW-0739">Sodium transport</keyword>
<keyword id="KW-0812">Transmembrane</keyword>
<keyword id="KW-1133">Transmembrane helix</keyword>
<keyword id="KW-0813">Transport</keyword>